<dbReference type="EC" id="7.1.1.-" evidence="1"/>
<dbReference type="EMBL" id="AM746676">
    <property type="protein sequence ID" value="CAN99231.1"/>
    <property type="molecule type" value="Genomic_DNA"/>
</dbReference>
<dbReference type="SMR" id="A9G9S9"/>
<dbReference type="STRING" id="448385.sce9059"/>
<dbReference type="KEGG" id="scl:sce9059"/>
<dbReference type="eggNOG" id="COG0377">
    <property type="taxonomic scope" value="Bacteria"/>
</dbReference>
<dbReference type="HOGENOM" id="CLU_055737_4_1_7"/>
<dbReference type="OrthoDB" id="9786737at2"/>
<dbReference type="BioCyc" id="SCEL448385:SCE_RS46400-MONOMER"/>
<dbReference type="Proteomes" id="UP000002139">
    <property type="component" value="Chromosome"/>
</dbReference>
<dbReference type="GO" id="GO:0005886">
    <property type="term" value="C:plasma membrane"/>
    <property type="evidence" value="ECO:0007669"/>
    <property type="project" value="UniProtKB-SubCell"/>
</dbReference>
<dbReference type="GO" id="GO:0045271">
    <property type="term" value="C:respiratory chain complex I"/>
    <property type="evidence" value="ECO:0007669"/>
    <property type="project" value="TreeGrafter"/>
</dbReference>
<dbReference type="GO" id="GO:0051539">
    <property type="term" value="F:4 iron, 4 sulfur cluster binding"/>
    <property type="evidence" value="ECO:0007669"/>
    <property type="project" value="UniProtKB-KW"/>
</dbReference>
<dbReference type="GO" id="GO:0005506">
    <property type="term" value="F:iron ion binding"/>
    <property type="evidence" value="ECO:0007669"/>
    <property type="project" value="UniProtKB-UniRule"/>
</dbReference>
<dbReference type="GO" id="GO:0008137">
    <property type="term" value="F:NADH dehydrogenase (ubiquinone) activity"/>
    <property type="evidence" value="ECO:0007669"/>
    <property type="project" value="InterPro"/>
</dbReference>
<dbReference type="GO" id="GO:0050136">
    <property type="term" value="F:NADH:ubiquinone reductase (non-electrogenic) activity"/>
    <property type="evidence" value="ECO:0007669"/>
    <property type="project" value="UniProtKB-UniRule"/>
</dbReference>
<dbReference type="GO" id="GO:0048038">
    <property type="term" value="F:quinone binding"/>
    <property type="evidence" value="ECO:0007669"/>
    <property type="project" value="UniProtKB-KW"/>
</dbReference>
<dbReference type="GO" id="GO:0009060">
    <property type="term" value="P:aerobic respiration"/>
    <property type="evidence" value="ECO:0007669"/>
    <property type="project" value="TreeGrafter"/>
</dbReference>
<dbReference type="GO" id="GO:0015990">
    <property type="term" value="P:electron transport coupled proton transport"/>
    <property type="evidence" value="ECO:0007669"/>
    <property type="project" value="TreeGrafter"/>
</dbReference>
<dbReference type="FunFam" id="3.40.50.12280:FF:000002">
    <property type="entry name" value="NADH-quinone oxidoreductase subunit B"/>
    <property type="match status" value="1"/>
</dbReference>
<dbReference type="Gene3D" id="3.40.50.12280">
    <property type="match status" value="1"/>
</dbReference>
<dbReference type="HAMAP" id="MF_01356">
    <property type="entry name" value="NDH1_NuoB"/>
    <property type="match status" value="1"/>
</dbReference>
<dbReference type="InterPro" id="IPR006137">
    <property type="entry name" value="NADH_UbQ_OxRdtase-like_20kDa"/>
</dbReference>
<dbReference type="InterPro" id="IPR006138">
    <property type="entry name" value="NADH_UQ_OxRdtase_20Kd_su"/>
</dbReference>
<dbReference type="NCBIfam" id="TIGR01957">
    <property type="entry name" value="nuoB_fam"/>
    <property type="match status" value="1"/>
</dbReference>
<dbReference type="NCBIfam" id="NF005012">
    <property type="entry name" value="PRK06411.1"/>
    <property type="match status" value="1"/>
</dbReference>
<dbReference type="NCBIfam" id="NF011393">
    <property type="entry name" value="PRK14818.1"/>
    <property type="match status" value="1"/>
</dbReference>
<dbReference type="PANTHER" id="PTHR11995">
    <property type="entry name" value="NADH DEHYDROGENASE"/>
    <property type="match status" value="1"/>
</dbReference>
<dbReference type="PANTHER" id="PTHR11995:SF14">
    <property type="entry name" value="NADH DEHYDROGENASE [UBIQUINONE] IRON-SULFUR PROTEIN 7, MITOCHONDRIAL"/>
    <property type="match status" value="1"/>
</dbReference>
<dbReference type="Pfam" id="PF01058">
    <property type="entry name" value="Oxidored_q6"/>
    <property type="match status" value="1"/>
</dbReference>
<dbReference type="SUPFAM" id="SSF56770">
    <property type="entry name" value="HydA/Nqo6-like"/>
    <property type="match status" value="1"/>
</dbReference>
<sequence length="182" mass="19905">MTSNLNLMAPPRGWEAKYESDGGGVITTSVDQTVNWLLNWGRSNSVWYMLFGLACCAIELMQTGGPRGDLERFGAAPRPSPRSSDLFIIAGTLTYKMATRVKRLYDQMSEPRFVISMGSCSNCGGLFQYAYSVCKGVDQIIPVDVYVPGCPPRPEALLEGLLKIQEKIKSERALGRRGATGG</sequence>
<organism>
    <name type="scientific">Sorangium cellulosum (strain So ce56)</name>
    <name type="common">Polyangium cellulosum (strain So ce56)</name>
    <dbReference type="NCBI Taxonomy" id="448385"/>
    <lineage>
        <taxon>Bacteria</taxon>
        <taxon>Pseudomonadati</taxon>
        <taxon>Myxococcota</taxon>
        <taxon>Polyangia</taxon>
        <taxon>Polyangiales</taxon>
        <taxon>Polyangiaceae</taxon>
        <taxon>Sorangium</taxon>
    </lineage>
</organism>
<protein>
    <recommendedName>
        <fullName evidence="1">NADH-quinone oxidoreductase subunit B 2</fullName>
        <ecNumber evidence="1">7.1.1.-</ecNumber>
    </recommendedName>
    <alternativeName>
        <fullName evidence="1">NADH dehydrogenase I subunit B 2</fullName>
    </alternativeName>
    <alternativeName>
        <fullName evidence="1">NDH-1 subunit B 2</fullName>
    </alternativeName>
</protein>
<comment type="function">
    <text evidence="1">NDH-1 shuttles electrons from NADH, via FMN and iron-sulfur (Fe-S) centers, to quinones in the respiratory chain. The immediate electron acceptor for the enzyme in this species is believed to be ubiquinone. Couples the redox reaction to proton translocation (for every two electrons transferred, four hydrogen ions are translocated across the cytoplasmic membrane), and thus conserves the redox energy in a proton gradient.</text>
</comment>
<comment type="catalytic activity">
    <reaction evidence="1">
        <text>a quinone + NADH + 5 H(+)(in) = a quinol + NAD(+) + 4 H(+)(out)</text>
        <dbReference type="Rhea" id="RHEA:57888"/>
        <dbReference type="ChEBI" id="CHEBI:15378"/>
        <dbReference type="ChEBI" id="CHEBI:24646"/>
        <dbReference type="ChEBI" id="CHEBI:57540"/>
        <dbReference type="ChEBI" id="CHEBI:57945"/>
        <dbReference type="ChEBI" id="CHEBI:132124"/>
    </reaction>
</comment>
<comment type="cofactor">
    <cofactor evidence="1">
        <name>[4Fe-4S] cluster</name>
        <dbReference type="ChEBI" id="CHEBI:49883"/>
    </cofactor>
    <text evidence="1">Binds 1 [4Fe-4S] cluster.</text>
</comment>
<comment type="subunit">
    <text evidence="1">NDH-1 is composed of 14 different subunits. Subunits NuoB, C, D, E, F, and G constitute the peripheral sector of the complex.</text>
</comment>
<comment type="subcellular location">
    <subcellularLocation>
        <location evidence="1">Cell inner membrane</location>
        <topology evidence="1">Peripheral membrane protein</topology>
        <orientation evidence="1">Cytoplasmic side</orientation>
    </subcellularLocation>
</comment>
<comment type="similarity">
    <text evidence="1">Belongs to the complex I 20 kDa subunit family.</text>
</comment>
<proteinExistence type="inferred from homology"/>
<accession>A9G9S9</accession>
<feature type="chain" id="PRO_0000376384" description="NADH-quinone oxidoreductase subunit B 2">
    <location>
        <begin position="1"/>
        <end position="182"/>
    </location>
</feature>
<feature type="binding site" evidence="1">
    <location>
        <position position="55"/>
    </location>
    <ligand>
        <name>[4Fe-4S] cluster</name>
        <dbReference type="ChEBI" id="CHEBI:49883"/>
    </ligand>
</feature>
<feature type="binding site" evidence="1">
    <location>
        <position position="56"/>
    </location>
    <ligand>
        <name>[4Fe-4S] cluster</name>
        <dbReference type="ChEBI" id="CHEBI:49883"/>
    </ligand>
</feature>
<feature type="binding site" evidence="1">
    <location>
        <position position="120"/>
    </location>
    <ligand>
        <name>[4Fe-4S] cluster</name>
        <dbReference type="ChEBI" id="CHEBI:49883"/>
    </ligand>
</feature>
<feature type="binding site" evidence="1">
    <location>
        <position position="150"/>
    </location>
    <ligand>
        <name>[4Fe-4S] cluster</name>
        <dbReference type="ChEBI" id="CHEBI:49883"/>
    </ligand>
</feature>
<name>NUOB2_SORC5</name>
<gene>
    <name evidence="1" type="primary">nuoB2</name>
    <name type="ordered locus">sce9059</name>
</gene>
<reference key="1">
    <citation type="journal article" date="2007" name="Nat. Biotechnol.">
        <title>Complete genome sequence of the myxobacterium Sorangium cellulosum.</title>
        <authorList>
            <person name="Schneiker S."/>
            <person name="Perlova O."/>
            <person name="Kaiser O."/>
            <person name="Gerth K."/>
            <person name="Alici A."/>
            <person name="Altmeyer M.O."/>
            <person name="Bartels D."/>
            <person name="Bekel T."/>
            <person name="Beyer S."/>
            <person name="Bode E."/>
            <person name="Bode H.B."/>
            <person name="Bolten C.J."/>
            <person name="Choudhuri J.V."/>
            <person name="Doss S."/>
            <person name="Elnakady Y.A."/>
            <person name="Frank B."/>
            <person name="Gaigalat L."/>
            <person name="Goesmann A."/>
            <person name="Groeger C."/>
            <person name="Gross F."/>
            <person name="Jelsbak L."/>
            <person name="Jelsbak L."/>
            <person name="Kalinowski J."/>
            <person name="Kegler C."/>
            <person name="Knauber T."/>
            <person name="Konietzny S."/>
            <person name="Kopp M."/>
            <person name="Krause L."/>
            <person name="Krug D."/>
            <person name="Linke B."/>
            <person name="Mahmud T."/>
            <person name="Martinez-Arias R."/>
            <person name="McHardy A.C."/>
            <person name="Merai M."/>
            <person name="Meyer F."/>
            <person name="Mormann S."/>
            <person name="Munoz-Dorado J."/>
            <person name="Perez J."/>
            <person name="Pradella S."/>
            <person name="Rachid S."/>
            <person name="Raddatz G."/>
            <person name="Rosenau F."/>
            <person name="Rueckert C."/>
            <person name="Sasse F."/>
            <person name="Scharfe M."/>
            <person name="Schuster S.C."/>
            <person name="Suen G."/>
            <person name="Treuner-Lange A."/>
            <person name="Velicer G.J."/>
            <person name="Vorholter F.-J."/>
            <person name="Weissman K.J."/>
            <person name="Welch R.D."/>
            <person name="Wenzel S.C."/>
            <person name="Whitworth D.E."/>
            <person name="Wilhelm S."/>
            <person name="Wittmann C."/>
            <person name="Bloecker H."/>
            <person name="Puehler A."/>
            <person name="Mueller R."/>
        </authorList>
    </citation>
    <scope>NUCLEOTIDE SEQUENCE [LARGE SCALE GENOMIC DNA]</scope>
    <source>
        <strain>So ce56</strain>
    </source>
</reference>
<keyword id="KW-0004">4Fe-4S</keyword>
<keyword id="KW-0997">Cell inner membrane</keyword>
<keyword id="KW-1003">Cell membrane</keyword>
<keyword id="KW-0408">Iron</keyword>
<keyword id="KW-0411">Iron-sulfur</keyword>
<keyword id="KW-0472">Membrane</keyword>
<keyword id="KW-0479">Metal-binding</keyword>
<keyword id="KW-0520">NAD</keyword>
<keyword id="KW-0874">Quinone</keyword>
<keyword id="KW-1185">Reference proteome</keyword>
<keyword id="KW-1278">Translocase</keyword>
<keyword id="KW-0813">Transport</keyword>
<keyword id="KW-0830">Ubiquinone</keyword>
<evidence type="ECO:0000255" key="1">
    <source>
        <dbReference type="HAMAP-Rule" id="MF_01356"/>
    </source>
</evidence>